<proteinExistence type="inferred from homology"/>
<accession>Q7N376</accession>
<reference key="1">
    <citation type="journal article" date="2003" name="Nat. Biotechnol.">
        <title>The genome sequence of the entomopathogenic bacterium Photorhabdus luminescens.</title>
        <authorList>
            <person name="Duchaud E."/>
            <person name="Rusniok C."/>
            <person name="Frangeul L."/>
            <person name="Buchrieser C."/>
            <person name="Givaudan A."/>
            <person name="Taourit S."/>
            <person name="Bocs S."/>
            <person name="Boursaux-Eude C."/>
            <person name="Chandler M."/>
            <person name="Charles J.-F."/>
            <person name="Dassa E."/>
            <person name="Derose R."/>
            <person name="Derzelle S."/>
            <person name="Freyssinet G."/>
            <person name="Gaudriault S."/>
            <person name="Medigue C."/>
            <person name="Lanois A."/>
            <person name="Powell K."/>
            <person name="Siguier P."/>
            <person name="Vincent R."/>
            <person name="Wingate V."/>
            <person name="Zouine M."/>
            <person name="Glaser P."/>
            <person name="Boemare N."/>
            <person name="Danchin A."/>
            <person name="Kunst F."/>
        </authorList>
    </citation>
    <scope>NUCLEOTIDE SEQUENCE [LARGE SCALE GENOMIC DNA]</scope>
    <source>
        <strain>DSM 15139 / CIP 105565 / TT01</strain>
    </source>
</reference>
<name>TMAR_PHOLL</name>
<keyword id="KW-0175">Coiled coil</keyword>
<keyword id="KW-0963">Cytoplasm</keyword>
<keyword id="KW-1185">Reference proteome</keyword>
<feature type="chain" id="PRO_0000072766" description="Pole-localizer protein TmaR">
    <location>
        <begin position="1"/>
        <end position="105"/>
    </location>
</feature>
<feature type="coiled-coil region" evidence="1">
    <location>
        <begin position="22"/>
        <end position="42"/>
    </location>
</feature>
<feature type="coiled-coil region" evidence="1">
    <location>
        <begin position="70"/>
        <end position="104"/>
    </location>
</feature>
<protein>
    <recommendedName>
        <fullName evidence="1">Pole-localizer protein TmaR</fullName>
    </recommendedName>
</protein>
<dbReference type="EMBL" id="BX571868">
    <property type="protein sequence ID" value="CAE15217.1"/>
    <property type="molecule type" value="Genomic_DNA"/>
</dbReference>
<dbReference type="RefSeq" id="WP_011147063.1">
    <property type="nucleotide sequence ID" value="NC_005126.1"/>
</dbReference>
<dbReference type="SMR" id="Q7N376"/>
<dbReference type="STRING" id="243265.plu2843"/>
<dbReference type="GeneID" id="48849105"/>
<dbReference type="KEGG" id="plu:plu2843"/>
<dbReference type="eggNOG" id="COG2926">
    <property type="taxonomic scope" value="Bacteria"/>
</dbReference>
<dbReference type="HOGENOM" id="CLU_153146_0_0_6"/>
<dbReference type="OrthoDB" id="90485at2"/>
<dbReference type="Proteomes" id="UP000002514">
    <property type="component" value="Chromosome"/>
</dbReference>
<dbReference type="GO" id="GO:0005829">
    <property type="term" value="C:cytosol"/>
    <property type="evidence" value="ECO:0007669"/>
    <property type="project" value="TreeGrafter"/>
</dbReference>
<dbReference type="HAMAP" id="MF_00683">
    <property type="entry name" value="Pole_loc_TmaR"/>
    <property type="match status" value="1"/>
</dbReference>
<dbReference type="InterPro" id="IPR007458">
    <property type="entry name" value="DUF496"/>
</dbReference>
<dbReference type="InterPro" id="IPR053375">
    <property type="entry name" value="UPF0265"/>
</dbReference>
<dbReference type="NCBIfam" id="NF003844">
    <property type="entry name" value="PRK05423.1"/>
    <property type="match status" value="1"/>
</dbReference>
<dbReference type="NCBIfam" id="NF040881">
    <property type="entry name" value="PTS_reg_TmaR"/>
    <property type="match status" value="1"/>
</dbReference>
<dbReference type="PANTHER" id="PTHR39591">
    <property type="entry name" value="UPF0265 PROTEIN YEEX"/>
    <property type="match status" value="1"/>
</dbReference>
<dbReference type="PANTHER" id="PTHR39591:SF1">
    <property type="entry name" value="UPF0265 PROTEIN YEEX"/>
    <property type="match status" value="1"/>
</dbReference>
<dbReference type="Pfam" id="PF04363">
    <property type="entry name" value="DUF496"/>
    <property type="match status" value="1"/>
</dbReference>
<dbReference type="PIRSF" id="PIRSF028773">
    <property type="entry name" value="UCP028773"/>
    <property type="match status" value="1"/>
</dbReference>
<sequence>MDNVNKPSFHNVLEFVRMFRRKNKLQREIADNEKKIRDNQKRVLLLDNLSEYIKPGMSIEDIQSIIMNMRSDYEDRIDDHIIKNADLSKERRELSKKLKTMGELK</sequence>
<organism>
    <name type="scientific">Photorhabdus laumondii subsp. laumondii (strain DSM 15139 / CIP 105565 / TT01)</name>
    <name type="common">Photorhabdus luminescens subsp. laumondii</name>
    <dbReference type="NCBI Taxonomy" id="243265"/>
    <lineage>
        <taxon>Bacteria</taxon>
        <taxon>Pseudomonadati</taxon>
        <taxon>Pseudomonadota</taxon>
        <taxon>Gammaproteobacteria</taxon>
        <taxon>Enterobacterales</taxon>
        <taxon>Morganellaceae</taxon>
        <taxon>Photorhabdus</taxon>
    </lineage>
</organism>
<evidence type="ECO:0000255" key="1">
    <source>
        <dbReference type="HAMAP-Rule" id="MF_00683"/>
    </source>
</evidence>
<comment type="function">
    <text evidence="1">Pole-localizer protein involved in the regulation of several cellular processes.</text>
</comment>
<comment type="subcellular location">
    <subcellularLocation>
        <location evidence="1">Cytoplasm</location>
    </subcellularLocation>
</comment>
<comment type="similarity">
    <text evidence="1">Belongs to the pole-localizer TmaR family.</text>
</comment>
<gene>
    <name evidence="1" type="primary">tmaR</name>
    <name type="ordered locus">plu2843</name>
</gene>